<feature type="chain" id="PRO_1000060120" description="Na(+)-translocating NADH-quinone reductase subunit A">
    <location>
        <begin position="1"/>
        <end position="447"/>
    </location>
</feature>
<keyword id="KW-0406">Ion transport</keyword>
<keyword id="KW-0520">NAD</keyword>
<keyword id="KW-1185">Reference proteome</keyword>
<keyword id="KW-0915">Sodium</keyword>
<keyword id="KW-0739">Sodium transport</keyword>
<keyword id="KW-1278">Translocase</keyword>
<keyword id="KW-0813">Transport</keyword>
<keyword id="KW-0830">Ubiquinone</keyword>
<gene>
    <name evidence="1" type="primary">nqrA</name>
    <name type="ordered locus">NGO_1413</name>
</gene>
<dbReference type="EC" id="7.2.1.1" evidence="1"/>
<dbReference type="EMBL" id="AE004969">
    <property type="protein sequence ID" value="AAW90057.1"/>
    <property type="molecule type" value="Genomic_DNA"/>
</dbReference>
<dbReference type="RefSeq" id="WP_003689268.1">
    <property type="nucleotide sequence ID" value="NC_002946.2"/>
</dbReference>
<dbReference type="RefSeq" id="YP_208469.1">
    <property type="nucleotide sequence ID" value="NC_002946.2"/>
</dbReference>
<dbReference type="SMR" id="Q5F6Y0"/>
<dbReference type="STRING" id="242231.NGO_1413"/>
<dbReference type="KEGG" id="ngo:NGO_1413"/>
<dbReference type="PATRIC" id="fig|242231.10.peg.1665"/>
<dbReference type="HOGENOM" id="CLU_046656_0_0_4"/>
<dbReference type="Proteomes" id="UP000000535">
    <property type="component" value="Chromosome"/>
</dbReference>
<dbReference type="GO" id="GO:0016655">
    <property type="term" value="F:oxidoreductase activity, acting on NAD(P)H, quinone or similar compound as acceptor"/>
    <property type="evidence" value="ECO:0007669"/>
    <property type="project" value="UniProtKB-UniRule"/>
</dbReference>
<dbReference type="GO" id="GO:0006814">
    <property type="term" value="P:sodium ion transport"/>
    <property type="evidence" value="ECO:0007669"/>
    <property type="project" value="UniProtKB-UniRule"/>
</dbReference>
<dbReference type="HAMAP" id="MF_00425">
    <property type="entry name" value="NqrA"/>
    <property type="match status" value="1"/>
</dbReference>
<dbReference type="InterPro" id="IPR008703">
    <property type="entry name" value="NqrA"/>
</dbReference>
<dbReference type="InterPro" id="IPR056148">
    <property type="entry name" value="NQRA_2nd"/>
</dbReference>
<dbReference type="InterPro" id="IPR022615">
    <property type="entry name" value="NqrA_C_domain"/>
</dbReference>
<dbReference type="InterPro" id="IPR056147">
    <property type="entry name" value="NQRA_N"/>
</dbReference>
<dbReference type="NCBIfam" id="TIGR01936">
    <property type="entry name" value="nqrA"/>
    <property type="match status" value="1"/>
</dbReference>
<dbReference type="NCBIfam" id="NF003759">
    <property type="entry name" value="PRK05352.1-2"/>
    <property type="match status" value="1"/>
</dbReference>
<dbReference type="NCBIfam" id="NF003761">
    <property type="entry name" value="PRK05352.1-4"/>
    <property type="match status" value="1"/>
</dbReference>
<dbReference type="PANTHER" id="PTHR37839">
    <property type="entry name" value="NA(+)-TRANSLOCATING NADH-QUINONE REDUCTASE SUBUNIT A"/>
    <property type="match status" value="1"/>
</dbReference>
<dbReference type="PANTHER" id="PTHR37839:SF1">
    <property type="entry name" value="NA(+)-TRANSLOCATING NADH-QUINONE REDUCTASE SUBUNIT A"/>
    <property type="match status" value="1"/>
</dbReference>
<dbReference type="Pfam" id="PF24836">
    <property type="entry name" value="NQRA_2nd"/>
    <property type="match status" value="1"/>
</dbReference>
<dbReference type="Pfam" id="PF05896">
    <property type="entry name" value="NQRA_N"/>
    <property type="match status" value="1"/>
</dbReference>
<dbReference type="Pfam" id="PF11973">
    <property type="entry name" value="NQRA_SLBB"/>
    <property type="match status" value="1"/>
</dbReference>
<comment type="function">
    <text evidence="1">NQR complex catalyzes the reduction of ubiquinone-1 to ubiquinol by two successive reactions, coupled with the transport of Na(+) ions from the cytoplasm to the periplasm. NqrA to NqrE are probably involved in the second step, the conversion of ubisemiquinone to ubiquinol.</text>
</comment>
<comment type="catalytic activity">
    <reaction evidence="1">
        <text>a ubiquinone + n Na(+)(in) + NADH + H(+) = a ubiquinol + n Na(+)(out) + NAD(+)</text>
        <dbReference type="Rhea" id="RHEA:47748"/>
        <dbReference type="Rhea" id="RHEA-COMP:9565"/>
        <dbReference type="Rhea" id="RHEA-COMP:9566"/>
        <dbReference type="ChEBI" id="CHEBI:15378"/>
        <dbReference type="ChEBI" id="CHEBI:16389"/>
        <dbReference type="ChEBI" id="CHEBI:17976"/>
        <dbReference type="ChEBI" id="CHEBI:29101"/>
        <dbReference type="ChEBI" id="CHEBI:57540"/>
        <dbReference type="ChEBI" id="CHEBI:57945"/>
        <dbReference type="EC" id="7.2.1.1"/>
    </reaction>
</comment>
<comment type="subunit">
    <text evidence="1">Composed of six subunits; NqrA, NqrB, NqrC, NqrD, NqrE and NqrF.</text>
</comment>
<comment type="similarity">
    <text evidence="1">Belongs to the NqrA family.</text>
</comment>
<evidence type="ECO:0000255" key="1">
    <source>
        <dbReference type="HAMAP-Rule" id="MF_00425"/>
    </source>
</evidence>
<name>NQRA_NEIG1</name>
<proteinExistence type="inferred from homology"/>
<reference key="1">
    <citation type="submission" date="2003-03" db="EMBL/GenBank/DDBJ databases">
        <title>The complete genome sequence of Neisseria gonorrhoeae.</title>
        <authorList>
            <person name="Lewis L.A."/>
            <person name="Gillaspy A.F."/>
            <person name="McLaughlin R.E."/>
            <person name="Gipson M."/>
            <person name="Ducey T.F."/>
            <person name="Ownbey T."/>
            <person name="Hartman K."/>
            <person name="Nydick C."/>
            <person name="Carson M.B."/>
            <person name="Vaughn J."/>
            <person name="Thomson C."/>
            <person name="Song L."/>
            <person name="Lin S."/>
            <person name="Yuan X."/>
            <person name="Najar F."/>
            <person name="Zhan M."/>
            <person name="Ren Q."/>
            <person name="Zhu H."/>
            <person name="Qi S."/>
            <person name="Kenton S.M."/>
            <person name="Lai H."/>
            <person name="White J.D."/>
            <person name="Clifton S."/>
            <person name="Roe B.A."/>
            <person name="Dyer D.W."/>
        </authorList>
    </citation>
    <scope>NUCLEOTIDE SEQUENCE [LARGE SCALE GENOMIC DNA]</scope>
    <source>
        <strain>ATCC 700825 / FA 1090</strain>
    </source>
</reference>
<protein>
    <recommendedName>
        <fullName evidence="1">Na(+)-translocating NADH-quinone reductase subunit A</fullName>
        <shortName evidence="1">Na(+)-NQR subunit A</shortName>
        <shortName evidence="1">Na(+)-translocating NQR subunit A</shortName>
        <ecNumber evidence="1">7.2.1.1</ecNumber>
    </recommendedName>
    <alternativeName>
        <fullName evidence="1">NQR complex subunit A</fullName>
    </alternativeName>
    <alternativeName>
        <fullName evidence="1">NQR-1 subunit A</fullName>
    </alternativeName>
</protein>
<sequence>MIKIKKGLNLPIAGRPEQVIYDGPAITEVALLGEEYVGMRPSMKIKEGEAVKKGQVLFEDKKNPGVVFTAPASGKIAAIHRGEKRVLQSVVIAVEGNDEIEFERYVPEALAKLSSEKVRRNLIQSGLWTALRTRPFSKIPAVDAEPFAIFVNAMDTNPLAADPTVIIKEAAEDFKRGLLVLSRLTERKIHVCKAAGADVPSENAANIETHEFGGPHPAGLSGTHIHFIEPVGANKTVWTINYQDVIAIGRLFVTGRLNTERVVALGGLQVNKPRLLRTVLGAKVSQLTAGELVDADNRVISGSVLNGAIAQGAHDYLGRYHNQISVIEEGRSKELFGWVAPQPDKYSITRTTLGHFLKNKLFKFTTAVNGGDRAMVPIGTYERVMPLDILPTLLLRDLIVGDTDSAQALGCLELDEEDLALCSFVCPGKYEYGPLLRKVLETIEKEG</sequence>
<accession>Q5F6Y0</accession>
<organism>
    <name type="scientific">Neisseria gonorrhoeae (strain ATCC 700825 / FA 1090)</name>
    <dbReference type="NCBI Taxonomy" id="242231"/>
    <lineage>
        <taxon>Bacteria</taxon>
        <taxon>Pseudomonadati</taxon>
        <taxon>Pseudomonadota</taxon>
        <taxon>Betaproteobacteria</taxon>
        <taxon>Neisseriales</taxon>
        <taxon>Neisseriaceae</taxon>
        <taxon>Neisseria</taxon>
    </lineage>
</organism>